<protein>
    <recommendedName>
        <fullName>Cadherin-related family member 3</fullName>
    </recommendedName>
    <alternativeName>
        <fullName>Cadherin-like protein 28</fullName>
    </alternativeName>
</protein>
<accession>Q6ZTQ4</accession>
<accession>Q8TCI7</accession>
<keyword id="KW-0002">3D-structure</keyword>
<keyword id="KW-0025">Alternative splicing</keyword>
<keyword id="KW-1058">Asthma</keyword>
<keyword id="KW-0106">Calcium</keyword>
<keyword id="KW-0130">Cell adhesion</keyword>
<keyword id="KW-1003">Cell membrane</keyword>
<keyword id="KW-0325">Glycoprotein</keyword>
<keyword id="KW-1183">Host cell receptor for virus entry</keyword>
<keyword id="KW-0945">Host-virus interaction</keyword>
<keyword id="KW-0472">Membrane</keyword>
<keyword id="KW-1267">Proteomics identification</keyword>
<keyword id="KW-0675">Receptor</keyword>
<keyword id="KW-1185">Reference proteome</keyword>
<keyword id="KW-0677">Repeat</keyword>
<keyword id="KW-0732">Signal</keyword>
<keyword id="KW-0812">Transmembrane</keyword>
<keyword id="KW-1133">Transmembrane helix</keyword>
<sequence length="885" mass="97977">MQEAIILLALLGAMSGGEALHLILLPATGNVAENSPPGTSVHKFSVKLSASLSPVIPGFPQIVNSNPLTEAFRVNWLSGTYFEVVTTGMEQLDFETGPNIFDLQIYVKDEVGVTDLQVLTVQVTDVNEPPQFQGNLAEGLHLYIVERANPGFIYQVEAFDPEDTSRNIPLSYFLISPPKSFRMSANGTLFSTTELDFEAGHRSFHLIVEVRDSGGLKASTELQVNIVNLNDEVPRFTSPTRVYTVLEELSPGTIVANITAEDPDDEGFPSHLLYSITTVSKYFMINQLTGTIQVAQRIDRDAGELRQNPTISLEVLVKDRPYGGQENRIQITFIVEDVNDNPATCQKFTFSIMVPERTAKGTLLLDLNKFCFDDDSEAPNNRFNFTMPSGVGSGSRFLQDPAGSGKIVLIGDLDYENPSNLAAGNKYTVIIQVQDVAPPYYKNNVYVYILTSPENEFPLIFDRPSYVFDVSERRPARTRVGQVRATDKDLPQSSLLYSISTGGASLQYPNVFWINPKTGELQLVTKVDCETTPIYILRIQATNNEDTSSVTVTVNILEENDEKPICTPNSYFLALPVDLKVGTNIQNFKLTCTDLDSSPRSFRYSIGPGNVNNHFTFSPNAGSNVTRLLLTSRFDYAGGFDKIWDYKLLVYVTDDNLMSDRKKAEALVETGTVTLSIKVIPHPTTIITTTPRPRVTYQVLRKNVYSPSAWYVPFVITLGSILLLGLLVYLVVLLAKAIHRHCPCKTGKNKEPLTKKGETKTAERDVVVETIQMNTIFDGEAIDPVTGETYEFNSKTGARKWKDPLTQMPKWKESSHQGAAPRRVTAGEGMGSLRSANWEEDELSGKAWAEDAGLGSRNEGGKLGNPKNRNPAFMNRAYPKPHPGK</sequence>
<dbReference type="EMBL" id="AK074414">
    <property type="protein sequence ID" value="BAB85073.1"/>
    <property type="molecule type" value="mRNA"/>
</dbReference>
<dbReference type="EMBL" id="AK126338">
    <property type="protein sequence ID" value="BAC86529.1"/>
    <property type="molecule type" value="mRNA"/>
</dbReference>
<dbReference type="EMBL" id="CH236947">
    <property type="protein sequence ID" value="EAL24403.1"/>
    <property type="molecule type" value="Genomic_DNA"/>
</dbReference>
<dbReference type="EMBL" id="BC111696">
    <property type="protein sequence ID" value="AAI11697.1"/>
    <property type="molecule type" value="mRNA"/>
</dbReference>
<dbReference type="EMBL" id="BC111738">
    <property type="protein sequence ID" value="AAI11739.1"/>
    <property type="molecule type" value="mRNA"/>
</dbReference>
<dbReference type="CCDS" id="CCDS47684.1">
    <molecule id="Q6ZTQ4-1"/>
</dbReference>
<dbReference type="RefSeq" id="NP_001288090.1">
    <property type="nucleotide sequence ID" value="NM_001301161.1"/>
</dbReference>
<dbReference type="RefSeq" id="NP_689963.2">
    <molecule id="Q6ZTQ4-1"/>
    <property type="nucleotide sequence ID" value="NM_152750.4"/>
</dbReference>
<dbReference type="PDB" id="6PPO">
    <property type="method" value="EM"/>
    <property type="resolution" value="3.20 A"/>
    <property type="chains" value="U=20-130"/>
</dbReference>
<dbReference type="PDB" id="6PSF">
    <property type="method" value="EM"/>
    <property type="resolution" value="3.50 A"/>
    <property type="chains" value="U=20-237"/>
</dbReference>
<dbReference type="PDB" id="7KNV">
    <property type="method" value="NMR"/>
    <property type="chains" value="A=21-130"/>
</dbReference>
<dbReference type="PDBsum" id="6PPO"/>
<dbReference type="PDBsum" id="6PSF"/>
<dbReference type="PDBsum" id="7KNV"/>
<dbReference type="EMDB" id="EMD-20443"/>
<dbReference type="EMDB" id="EMD-20458"/>
<dbReference type="SMR" id="Q6ZTQ4"/>
<dbReference type="BioGRID" id="128795">
    <property type="interactions" value="46"/>
</dbReference>
<dbReference type="FunCoup" id="Q6ZTQ4">
    <property type="interactions" value="39"/>
</dbReference>
<dbReference type="IntAct" id="Q6ZTQ4">
    <property type="interactions" value="11"/>
</dbReference>
<dbReference type="STRING" id="9606.ENSP00000325954"/>
<dbReference type="GlyCosmos" id="Q6ZTQ4">
    <property type="glycosylation" value="3 sites, No reported glycans"/>
</dbReference>
<dbReference type="GlyGen" id="Q6ZTQ4">
    <property type="glycosylation" value="5 sites"/>
</dbReference>
<dbReference type="iPTMnet" id="Q6ZTQ4"/>
<dbReference type="PhosphoSitePlus" id="Q6ZTQ4"/>
<dbReference type="BioMuta" id="CDHR3"/>
<dbReference type="DMDM" id="74758833"/>
<dbReference type="MassIVE" id="Q6ZTQ4"/>
<dbReference type="PaxDb" id="9606-ENSP00000325954"/>
<dbReference type="PeptideAtlas" id="Q6ZTQ4"/>
<dbReference type="ProteomicsDB" id="68286">
    <molecule id="Q6ZTQ4-1"/>
</dbReference>
<dbReference type="ProteomicsDB" id="68287">
    <molecule id="Q6ZTQ4-2"/>
</dbReference>
<dbReference type="Antibodypedia" id="2413">
    <property type="antibodies" value="58 antibodies from 15 providers"/>
</dbReference>
<dbReference type="DNASU" id="222256"/>
<dbReference type="Ensembl" id="ENST00000317716.14">
    <molecule id="Q6ZTQ4-1"/>
    <property type="protein sequence ID" value="ENSP00000325954.9"/>
    <property type="gene ID" value="ENSG00000128536.16"/>
</dbReference>
<dbReference type="GeneID" id="222256"/>
<dbReference type="KEGG" id="hsa:222256"/>
<dbReference type="MANE-Select" id="ENST00000317716.14">
    <property type="protein sequence ID" value="ENSP00000325954.9"/>
    <property type="RefSeq nucleotide sequence ID" value="NM_152750.5"/>
    <property type="RefSeq protein sequence ID" value="NP_689963.2"/>
</dbReference>
<dbReference type="UCSC" id="uc003vdl.5">
    <molecule id="Q6ZTQ4-1"/>
    <property type="organism name" value="human"/>
</dbReference>
<dbReference type="AGR" id="HGNC:26308"/>
<dbReference type="CTD" id="222256"/>
<dbReference type="DisGeNET" id="222256"/>
<dbReference type="GeneCards" id="CDHR3"/>
<dbReference type="HGNC" id="HGNC:26308">
    <property type="gene designation" value="CDHR3"/>
</dbReference>
<dbReference type="HPA" id="ENSG00000128536">
    <property type="expression patterns" value="Group enriched (choroid plexus, fallopian tube)"/>
</dbReference>
<dbReference type="MIM" id="615610">
    <property type="type" value="gene"/>
</dbReference>
<dbReference type="neXtProt" id="NX_Q6ZTQ4"/>
<dbReference type="OpenTargets" id="ENSG00000128536"/>
<dbReference type="PharmGKB" id="PA165617747"/>
<dbReference type="VEuPathDB" id="HostDB:ENSG00000128536"/>
<dbReference type="eggNOG" id="KOG3594">
    <property type="taxonomic scope" value="Eukaryota"/>
</dbReference>
<dbReference type="eggNOG" id="KOG4289">
    <property type="taxonomic scope" value="Eukaryota"/>
</dbReference>
<dbReference type="GeneTree" id="ENSGT00940000161245"/>
<dbReference type="InParanoid" id="Q6ZTQ4"/>
<dbReference type="OMA" id="WYVPFVV"/>
<dbReference type="OrthoDB" id="9047765at2759"/>
<dbReference type="PAN-GO" id="Q6ZTQ4">
    <property type="GO annotations" value="9 GO annotations based on evolutionary models"/>
</dbReference>
<dbReference type="PhylomeDB" id="Q6ZTQ4"/>
<dbReference type="TreeFam" id="TF336601"/>
<dbReference type="PathwayCommons" id="Q6ZTQ4"/>
<dbReference type="SignaLink" id="Q6ZTQ4"/>
<dbReference type="BioGRID-ORCS" id="222256">
    <property type="hits" value="10 hits in 1141 CRISPR screens"/>
</dbReference>
<dbReference type="ChiTaRS" id="CDHR3">
    <property type="organism name" value="human"/>
</dbReference>
<dbReference type="GenomeRNAi" id="222256"/>
<dbReference type="Pharos" id="Q6ZTQ4">
    <property type="development level" value="Tbio"/>
</dbReference>
<dbReference type="PRO" id="PR:Q6ZTQ4"/>
<dbReference type="Proteomes" id="UP000005640">
    <property type="component" value="Chromosome 7"/>
</dbReference>
<dbReference type="RNAct" id="Q6ZTQ4">
    <property type="molecule type" value="protein"/>
</dbReference>
<dbReference type="Bgee" id="ENSG00000128536">
    <property type="expression patterns" value="Expressed in right uterine tube and 114 other cell types or tissues"/>
</dbReference>
<dbReference type="ExpressionAtlas" id="Q6ZTQ4">
    <property type="expression patterns" value="baseline and differential"/>
</dbReference>
<dbReference type="GO" id="GO:0005912">
    <property type="term" value="C:adherens junction"/>
    <property type="evidence" value="ECO:0000318"/>
    <property type="project" value="GO_Central"/>
</dbReference>
<dbReference type="GO" id="GO:0016342">
    <property type="term" value="C:catenin complex"/>
    <property type="evidence" value="ECO:0000318"/>
    <property type="project" value="GO_Central"/>
</dbReference>
<dbReference type="GO" id="GO:0005886">
    <property type="term" value="C:plasma membrane"/>
    <property type="evidence" value="ECO:0000314"/>
    <property type="project" value="UniProtKB"/>
</dbReference>
<dbReference type="GO" id="GO:0008013">
    <property type="term" value="F:beta-catenin binding"/>
    <property type="evidence" value="ECO:0000318"/>
    <property type="project" value="GO_Central"/>
</dbReference>
<dbReference type="GO" id="GO:0045296">
    <property type="term" value="F:cadherin binding"/>
    <property type="evidence" value="ECO:0000318"/>
    <property type="project" value="GO_Central"/>
</dbReference>
<dbReference type="GO" id="GO:0005509">
    <property type="term" value="F:calcium ion binding"/>
    <property type="evidence" value="ECO:0007669"/>
    <property type="project" value="InterPro"/>
</dbReference>
<dbReference type="GO" id="GO:0001618">
    <property type="term" value="F:virus receptor activity"/>
    <property type="evidence" value="ECO:0007669"/>
    <property type="project" value="UniProtKB-KW"/>
</dbReference>
<dbReference type="GO" id="GO:0034332">
    <property type="term" value="P:adherens junction organization"/>
    <property type="evidence" value="ECO:0000318"/>
    <property type="project" value="GO_Central"/>
</dbReference>
<dbReference type="GO" id="GO:0016339">
    <property type="term" value="P:calcium-dependent cell-cell adhesion via plasma membrane cell adhesion molecules"/>
    <property type="evidence" value="ECO:0000318"/>
    <property type="project" value="GO_Central"/>
</dbReference>
<dbReference type="GO" id="GO:0016477">
    <property type="term" value="P:cell migration"/>
    <property type="evidence" value="ECO:0000318"/>
    <property type="project" value="GO_Central"/>
</dbReference>
<dbReference type="GO" id="GO:0000902">
    <property type="term" value="P:cell morphogenesis"/>
    <property type="evidence" value="ECO:0000318"/>
    <property type="project" value="GO_Central"/>
</dbReference>
<dbReference type="GO" id="GO:0044331">
    <property type="term" value="P:cell-cell adhesion mediated by cadherin"/>
    <property type="evidence" value="ECO:0000318"/>
    <property type="project" value="GO_Central"/>
</dbReference>
<dbReference type="GO" id="GO:0007043">
    <property type="term" value="P:cell-cell junction assembly"/>
    <property type="evidence" value="ECO:0000318"/>
    <property type="project" value="GO_Central"/>
</dbReference>
<dbReference type="GO" id="GO:0007156">
    <property type="term" value="P:homophilic cell adhesion via plasma membrane adhesion molecules"/>
    <property type="evidence" value="ECO:0007669"/>
    <property type="project" value="InterPro"/>
</dbReference>
<dbReference type="CDD" id="cd11304">
    <property type="entry name" value="Cadherin_repeat"/>
    <property type="match status" value="5"/>
</dbReference>
<dbReference type="FunFam" id="2.60.40.60:FF:000231">
    <property type="entry name" value="Cadherin related family member 3"/>
    <property type="match status" value="1"/>
</dbReference>
<dbReference type="FunFam" id="2.60.40.60:FF:000237">
    <property type="entry name" value="Cadherin related family member 3"/>
    <property type="match status" value="1"/>
</dbReference>
<dbReference type="FunFam" id="2.60.40.60:FF:000244">
    <property type="entry name" value="Cadherin related family member 3"/>
    <property type="match status" value="1"/>
</dbReference>
<dbReference type="FunFam" id="2.60.40.60:FF:000250">
    <property type="entry name" value="Cadherin related family member 3"/>
    <property type="match status" value="1"/>
</dbReference>
<dbReference type="FunFam" id="2.60.40.60:FF:000281">
    <property type="entry name" value="Cadherin related family member 3"/>
    <property type="match status" value="1"/>
</dbReference>
<dbReference type="Gene3D" id="2.60.40.60">
    <property type="entry name" value="Cadherins"/>
    <property type="match status" value="6"/>
</dbReference>
<dbReference type="InterPro" id="IPR039808">
    <property type="entry name" value="Cadherin"/>
</dbReference>
<dbReference type="InterPro" id="IPR002126">
    <property type="entry name" value="Cadherin-like_dom"/>
</dbReference>
<dbReference type="InterPro" id="IPR015919">
    <property type="entry name" value="Cadherin-like_sf"/>
</dbReference>
<dbReference type="PANTHER" id="PTHR24027:SF422">
    <property type="entry name" value="CADHERIN DOMAIN-CONTAINING PROTEIN"/>
    <property type="match status" value="1"/>
</dbReference>
<dbReference type="PANTHER" id="PTHR24027">
    <property type="entry name" value="CADHERIN-23"/>
    <property type="match status" value="1"/>
</dbReference>
<dbReference type="Pfam" id="PF00028">
    <property type="entry name" value="Cadherin"/>
    <property type="match status" value="3"/>
</dbReference>
<dbReference type="PRINTS" id="PR00205">
    <property type="entry name" value="CADHERIN"/>
</dbReference>
<dbReference type="SMART" id="SM00112">
    <property type="entry name" value="CA"/>
    <property type="match status" value="5"/>
</dbReference>
<dbReference type="SUPFAM" id="SSF49313">
    <property type="entry name" value="Cadherin-like"/>
    <property type="match status" value="5"/>
</dbReference>
<dbReference type="PROSITE" id="PS50268">
    <property type="entry name" value="CADHERIN_2"/>
    <property type="match status" value="6"/>
</dbReference>
<organism>
    <name type="scientific">Homo sapiens</name>
    <name type="common">Human</name>
    <dbReference type="NCBI Taxonomy" id="9606"/>
    <lineage>
        <taxon>Eukaryota</taxon>
        <taxon>Metazoa</taxon>
        <taxon>Chordata</taxon>
        <taxon>Craniata</taxon>
        <taxon>Vertebrata</taxon>
        <taxon>Euteleostomi</taxon>
        <taxon>Mammalia</taxon>
        <taxon>Eutheria</taxon>
        <taxon>Euarchontoglires</taxon>
        <taxon>Primates</taxon>
        <taxon>Haplorrhini</taxon>
        <taxon>Catarrhini</taxon>
        <taxon>Hominidae</taxon>
        <taxon>Homo</taxon>
    </lineage>
</organism>
<feature type="signal peptide" evidence="2">
    <location>
        <begin position="1"/>
        <end position="19"/>
    </location>
</feature>
<feature type="chain" id="PRO_0000305903" description="Cadherin-related family member 3">
    <location>
        <begin position="20"/>
        <end position="885"/>
    </location>
</feature>
<feature type="topological domain" description="Extracellular" evidence="2">
    <location>
        <begin position="20"/>
        <end position="713"/>
    </location>
</feature>
<feature type="transmembrane region" description="Helical" evidence="2">
    <location>
        <begin position="714"/>
        <end position="734"/>
    </location>
</feature>
<feature type="topological domain" description="Cytoplasmic" evidence="2">
    <location>
        <begin position="735"/>
        <end position="885"/>
    </location>
</feature>
<feature type="domain" description="Cadherin 1" evidence="3">
    <location>
        <begin position="23"/>
        <end position="132"/>
    </location>
</feature>
<feature type="domain" description="Cadherin 2" evidence="3">
    <location>
        <begin position="136"/>
        <end position="236"/>
    </location>
</feature>
<feature type="domain" description="Cadherin 3" evidence="3">
    <location>
        <begin position="237"/>
        <end position="344"/>
    </location>
</feature>
<feature type="domain" description="Cadherin 4" evidence="3">
    <location>
        <begin position="346"/>
        <end position="466"/>
    </location>
</feature>
<feature type="domain" description="Cadherin 5" evidence="3">
    <location>
        <begin position="462"/>
        <end position="566"/>
    </location>
</feature>
<feature type="domain" description="Cadherin 6" evidence="3">
    <location>
        <begin position="567"/>
        <end position="695"/>
    </location>
</feature>
<feature type="region of interest" description="Disordered" evidence="4">
    <location>
        <begin position="808"/>
        <end position="885"/>
    </location>
</feature>
<feature type="glycosylation site" description="N-linked (GlcNAc...) asparagine" evidence="2">
    <location>
        <position position="186"/>
    </location>
</feature>
<feature type="glycosylation site" description="N-linked (GlcNAc...) asparagine" evidence="2">
    <location>
        <position position="257"/>
    </location>
</feature>
<feature type="glycosylation site" description="N-linked (GlcNAc...) asparagine" evidence="2">
    <location>
        <position position="624"/>
    </location>
</feature>
<feature type="splice variant" id="VSP_028352" description="In isoform 2." evidence="8">
    <location>
        <begin position="1"/>
        <end position="283"/>
    </location>
</feature>
<feature type="splice variant" id="VSP_028353" description="In isoform 2." evidence="8">
    <original>RTRVGQVRATDKDLPQSSLLYSISTGGASLQYPNVFWINPKTGELQLVTKVDCETTPIYILRIQATNNEDTSSVTVTVNILEEN</original>
    <variation>QGHLSGPEEKRLLSICMVRAVCHHFGLHIASGSPRVPGRPIGQSRPQTLPLQDWEEQGTSDKERRNEDCRERRRGGNYPDEHYL</variation>
    <location>
        <begin position="477"/>
        <end position="560"/>
    </location>
</feature>
<feature type="splice variant" id="VSP_028354" description="In isoform 2." evidence="8">
    <location>
        <begin position="561"/>
        <end position="885"/>
    </location>
</feature>
<feature type="sequence variant" id="VAR_035228" description="In dbSNP:rs35008315.">
    <original>V</original>
    <variation>M</variation>
    <location>
        <position position="55"/>
    </location>
</feature>
<feature type="sequence variant" id="VAR_035229" description="In dbSNP:rs34426483.">
    <original>Q</original>
    <variation>H</variation>
    <location>
        <position position="61"/>
    </location>
</feature>
<feature type="sequence variant" id="VAR_035230" description="Increases cell surface expression; dbSNP:rs6967330." evidence="5">
    <original>C</original>
    <variation>Y</variation>
    <location>
        <position position="529"/>
    </location>
</feature>
<feature type="mutagenesis site" description="Complete loss of interaction with human rhinovirus C." evidence="7">
    <original>P</original>
    <variation>A</variation>
    <location>
        <position position="26"/>
    </location>
</feature>
<feature type="mutagenesis site" description="Complete loss of interaction with human rhinovirus C." evidence="7">
    <original>I</original>
    <variation>A</variation>
    <location>
        <position position="100"/>
    </location>
</feature>
<feature type="mutagenesis site" description="Complete loss of interaction with human rhinovirus C." evidence="7">
    <original>D</original>
    <variation>A</variation>
    <variation>N</variation>
    <location>
        <position position="102"/>
    </location>
</feature>
<feature type="mutagenesis site" description="Complete loss of interaction with human rhinovirus C." evidence="7">
    <original>V</original>
    <variation>G</variation>
    <location>
        <position position="118"/>
    </location>
</feature>
<feature type="strand" evidence="9">
    <location>
        <begin position="21"/>
        <end position="23"/>
    </location>
</feature>
<feature type="strand" evidence="9">
    <location>
        <begin position="26"/>
        <end position="31"/>
    </location>
</feature>
<feature type="strand" evidence="9">
    <location>
        <begin position="40"/>
        <end position="47"/>
    </location>
</feature>
<feature type="turn" evidence="9">
    <location>
        <begin position="49"/>
        <end position="51"/>
    </location>
</feature>
<feature type="strand" evidence="9">
    <location>
        <begin position="60"/>
        <end position="62"/>
    </location>
</feature>
<feature type="strand" evidence="9">
    <location>
        <begin position="74"/>
        <end position="76"/>
    </location>
</feature>
<feature type="strand" evidence="9">
    <location>
        <begin position="78"/>
        <end position="85"/>
    </location>
</feature>
<feature type="strand" evidence="9">
    <location>
        <begin position="88"/>
        <end position="90"/>
    </location>
</feature>
<feature type="strand" evidence="9">
    <location>
        <begin position="94"/>
        <end position="97"/>
    </location>
</feature>
<feature type="strand" evidence="9">
    <location>
        <begin position="100"/>
        <end position="107"/>
    </location>
</feature>
<feature type="strand" evidence="9">
    <location>
        <begin position="109"/>
        <end position="111"/>
    </location>
</feature>
<feature type="strand" evidence="9">
    <location>
        <begin position="115"/>
        <end position="123"/>
    </location>
</feature>
<proteinExistence type="evidence at protein level"/>
<reference key="1">
    <citation type="journal article" date="2004" name="Nat. Genet.">
        <title>Complete sequencing and characterization of 21,243 full-length human cDNAs.</title>
        <authorList>
            <person name="Ota T."/>
            <person name="Suzuki Y."/>
            <person name="Nishikawa T."/>
            <person name="Otsuki T."/>
            <person name="Sugiyama T."/>
            <person name="Irie R."/>
            <person name="Wakamatsu A."/>
            <person name="Hayashi K."/>
            <person name="Sato H."/>
            <person name="Nagai K."/>
            <person name="Kimura K."/>
            <person name="Makita H."/>
            <person name="Sekine M."/>
            <person name="Obayashi M."/>
            <person name="Nishi T."/>
            <person name="Shibahara T."/>
            <person name="Tanaka T."/>
            <person name="Ishii S."/>
            <person name="Yamamoto J."/>
            <person name="Saito K."/>
            <person name="Kawai Y."/>
            <person name="Isono Y."/>
            <person name="Nakamura Y."/>
            <person name="Nagahari K."/>
            <person name="Murakami K."/>
            <person name="Yasuda T."/>
            <person name="Iwayanagi T."/>
            <person name="Wagatsuma M."/>
            <person name="Shiratori A."/>
            <person name="Sudo H."/>
            <person name="Hosoiri T."/>
            <person name="Kaku Y."/>
            <person name="Kodaira H."/>
            <person name="Kondo H."/>
            <person name="Sugawara M."/>
            <person name="Takahashi M."/>
            <person name="Kanda K."/>
            <person name="Yokoi T."/>
            <person name="Furuya T."/>
            <person name="Kikkawa E."/>
            <person name="Omura Y."/>
            <person name="Abe K."/>
            <person name="Kamihara K."/>
            <person name="Katsuta N."/>
            <person name="Sato K."/>
            <person name="Tanikawa M."/>
            <person name="Yamazaki M."/>
            <person name="Ninomiya K."/>
            <person name="Ishibashi T."/>
            <person name="Yamashita H."/>
            <person name="Murakawa K."/>
            <person name="Fujimori K."/>
            <person name="Tanai H."/>
            <person name="Kimata M."/>
            <person name="Watanabe M."/>
            <person name="Hiraoka S."/>
            <person name="Chiba Y."/>
            <person name="Ishida S."/>
            <person name="Ono Y."/>
            <person name="Takiguchi S."/>
            <person name="Watanabe S."/>
            <person name="Yosida M."/>
            <person name="Hotuta T."/>
            <person name="Kusano J."/>
            <person name="Kanehori K."/>
            <person name="Takahashi-Fujii A."/>
            <person name="Hara H."/>
            <person name="Tanase T.-O."/>
            <person name="Nomura Y."/>
            <person name="Togiya S."/>
            <person name="Komai F."/>
            <person name="Hara R."/>
            <person name="Takeuchi K."/>
            <person name="Arita M."/>
            <person name="Imose N."/>
            <person name="Musashino K."/>
            <person name="Yuuki H."/>
            <person name="Oshima A."/>
            <person name="Sasaki N."/>
            <person name="Aotsuka S."/>
            <person name="Yoshikawa Y."/>
            <person name="Matsunawa H."/>
            <person name="Ichihara T."/>
            <person name="Shiohata N."/>
            <person name="Sano S."/>
            <person name="Moriya S."/>
            <person name="Momiyama H."/>
            <person name="Satoh N."/>
            <person name="Takami S."/>
            <person name="Terashima Y."/>
            <person name="Suzuki O."/>
            <person name="Nakagawa S."/>
            <person name="Senoh A."/>
            <person name="Mizoguchi H."/>
            <person name="Goto Y."/>
            <person name="Shimizu F."/>
            <person name="Wakebe H."/>
            <person name="Hishigaki H."/>
            <person name="Watanabe T."/>
            <person name="Sugiyama A."/>
            <person name="Takemoto M."/>
            <person name="Kawakami B."/>
            <person name="Yamazaki M."/>
            <person name="Watanabe K."/>
            <person name="Kumagai A."/>
            <person name="Itakura S."/>
            <person name="Fukuzumi Y."/>
            <person name="Fujimori Y."/>
            <person name="Komiyama M."/>
            <person name="Tashiro H."/>
            <person name="Tanigami A."/>
            <person name="Fujiwara T."/>
            <person name="Ono T."/>
            <person name="Yamada K."/>
            <person name="Fujii Y."/>
            <person name="Ozaki K."/>
            <person name="Hirao M."/>
            <person name="Ohmori Y."/>
            <person name="Kawabata A."/>
            <person name="Hikiji T."/>
            <person name="Kobatake N."/>
            <person name="Inagaki H."/>
            <person name="Ikema Y."/>
            <person name="Okamoto S."/>
            <person name="Okitani R."/>
            <person name="Kawakami T."/>
            <person name="Noguchi S."/>
            <person name="Itoh T."/>
            <person name="Shigeta K."/>
            <person name="Senba T."/>
            <person name="Matsumura K."/>
            <person name="Nakajima Y."/>
            <person name="Mizuno T."/>
            <person name="Morinaga M."/>
            <person name="Sasaki M."/>
            <person name="Togashi T."/>
            <person name="Oyama M."/>
            <person name="Hata H."/>
            <person name="Watanabe M."/>
            <person name="Komatsu T."/>
            <person name="Mizushima-Sugano J."/>
            <person name="Satoh T."/>
            <person name="Shirai Y."/>
            <person name="Takahashi Y."/>
            <person name="Nakagawa K."/>
            <person name="Okumura K."/>
            <person name="Nagase T."/>
            <person name="Nomura N."/>
            <person name="Kikuchi H."/>
            <person name="Masuho Y."/>
            <person name="Yamashita R."/>
            <person name="Nakai K."/>
            <person name="Yada T."/>
            <person name="Nakamura Y."/>
            <person name="Ohara O."/>
            <person name="Isogai T."/>
            <person name="Sugano S."/>
        </authorList>
    </citation>
    <scope>NUCLEOTIDE SEQUENCE [LARGE SCALE MRNA] (ISOFORMS 1 AND 2)</scope>
    <source>
        <tissue>Ileal mucosa</tissue>
        <tissue>Trachea</tissue>
    </source>
</reference>
<reference key="2">
    <citation type="journal article" date="2003" name="Science">
        <title>Human chromosome 7: DNA sequence and biology.</title>
        <authorList>
            <person name="Scherer S.W."/>
            <person name="Cheung J."/>
            <person name="MacDonald J.R."/>
            <person name="Osborne L.R."/>
            <person name="Nakabayashi K."/>
            <person name="Herbrick J.-A."/>
            <person name="Carson A.R."/>
            <person name="Parker-Katiraee L."/>
            <person name="Skaug J."/>
            <person name="Khaja R."/>
            <person name="Zhang J."/>
            <person name="Hudek A.K."/>
            <person name="Li M."/>
            <person name="Haddad M."/>
            <person name="Duggan G.E."/>
            <person name="Fernandez B.A."/>
            <person name="Kanematsu E."/>
            <person name="Gentles S."/>
            <person name="Christopoulos C.C."/>
            <person name="Choufani S."/>
            <person name="Kwasnicka D."/>
            <person name="Zheng X.H."/>
            <person name="Lai Z."/>
            <person name="Nusskern D.R."/>
            <person name="Zhang Q."/>
            <person name="Gu Z."/>
            <person name="Lu F."/>
            <person name="Zeesman S."/>
            <person name="Nowaczyk M.J."/>
            <person name="Teshima I."/>
            <person name="Chitayat D."/>
            <person name="Shuman C."/>
            <person name="Weksberg R."/>
            <person name="Zackai E.H."/>
            <person name="Grebe T.A."/>
            <person name="Cox S.R."/>
            <person name="Kirkpatrick S.J."/>
            <person name="Rahman N."/>
            <person name="Friedman J.M."/>
            <person name="Heng H.H.Q."/>
            <person name="Pelicci P.G."/>
            <person name="Lo-Coco F."/>
            <person name="Belloni E."/>
            <person name="Shaffer L.G."/>
            <person name="Pober B."/>
            <person name="Morton C.C."/>
            <person name="Gusella J.F."/>
            <person name="Bruns G.A.P."/>
            <person name="Korf B.R."/>
            <person name="Quade B.J."/>
            <person name="Ligon A.H."/>
            <person name="Ferguson H."/>
            <person name="Higgins A.W."/>
            <person name="Leach N.T."/>
            <person name="Herrick S.R."/>
            <person name="Lemyre E."/>
            <person name="Farra C.G."/>
            <person name="Kim H.-G."/>
            <person name="Summers A.M."/>
            <person name="Gripp K.W."/>
            <person name="Roberts W."/>
            <person name="Szatmari P."/>
            <person name="Winsor E.J.T."/>
            <person name="Grzeschik K.-H."/>
            <person name="Teebi A."/>
            <person name="Minassian B.A."/>
            <person name="Kere J."/>
            <person name="Armengol L."/>
            <person name="Pujana M.A."/>
            <person name="Estivill X."/>
            <person name="Wilson M.D."/>
            <person name="Koop B.F."/>
            <person name="Tosi S."/>
            <person name="Moore G.E."/>
            <person name="Boright A.P."/>
            <person name="Zlotorynski E."/>
            <person name="Kerem B."/>
            <person name="Kroisel P.M."/>
            <person name="Petek E."/>
            <person name="Oscier D.G."/>
            <person name="Mould S.J."/>
            <person name="Doehner H."/>
            <person name="Doehner K."/>
            <person name="Rommens J.M."/>
            <person name="Vincent J.B."/>
            <person name="Venter J.C."/>
            <person name="Li P.W."/>
            <person name="Mural R.J."/>
            <person name="Adams M.D."/>
            <person name="Tsui L.-C."/>
        </authorList>
    </citation>
    <scope>NUCLEOTIDE SEQUENCE [LARGE SCALE GENOMIC DNA]</scope>
</reference>
<reference key="3">
    <citation type="journal article" date="2004" name="Genome Res.">
        <title>The status, quality, and expansion of the NIH full-length cDNA project: the Mammalian Gene Collection (MGC).</title>
        <authorList>
            <consortium name="The MGC Project Team"/>
        </authorList>
    </citation>
    <scope>NUCLEOTIDE SEQUENCE [LARGE SCALE MRNA] (ISOFORM 1)</scope>
</reference>
<reference key="4">
    <citation type="journal article" date="2014" name="Nat. Genet.">
        <title>A genome-wide association study identifies CDHR3 as a susceptibility locus for early childhood asthma with severe exacerbations.</title>
        <authorList>
            <person name="Bonnelykke K."/>
            <person name="Sleiman P."/>
            <person name="Nielsen K."/>
            <person name="Kreiner-Moller E."/>
            <person name="Mercader J.M."/>
            <person name="Belgrave D."/>
            <person name="den Dekker H.T."/>
            <person name="Husby A."/>
            <person name="Sevelsted A."/>
            <person name="Faura-Tellez G."/>
            <person name="Mortensen L.J."/>
            <person name="Paternoster L."/>
            <person name="Flaaten R."/>
            <person name="Molgaard A."/>
            <person name="Smart D.E."/>
            <person name="Thomsen P.F."/>
            <person name="Rasmussen M.A."/>
            <person name="Bonas-Guarch S."/>
            <person name="Holst C."/>
            <person name="Nohr E.A."/>
            <person name="Yadav R."/>
            <person name="March M.E."/>
            <person name="Blicher T."/>
            <person name="Lackie P.M."/>
            <person name="Jaddoe V.W."/>
            <person name="Simpson A."/>
            <person name="Holloway J.W."/>
            <person name="Duijts L."/>
            <person name="Custovic A."/>
            <person name="Davies D.E."/>
            <person name="Torrents D."/>
            <person name="Gupta R."/>
            <person name="Hollegaard M.V."/>
            <person name="Hougaard D.M."/>
            <person name="Hakonarson H."/>
            <person name="Bisgaard H."/>
        </authorList>
    </citation>
    <scope>TISSUE SPECIFICITY</scope>
    <scope>CHARACTERIZATION OF VARIANT TYR-529</scope>
    <scope>SUBCELLULAR LOCATION</scope>
    <scope>INVOLVEMENT IN SUSCEPTIBILITY TO ASTHMA</scope>
</reference>
<reference key="5">
    <citation type="journal article" date="2015" name="Proc. Natl. Acad. Sci. U.S.A.">
        <title>Cadherin-related family member 3, a childhood asthma susceptibility gene product, mediates rhinovirus C binding and replication.</title>
        <authorList>
            <person name="Bochkov Y.A."/>
            <person name="Watters K."/>
            <person name="Ashraf S."/>
            <person name="Griggs T.F."/>
            <person name="Devries M.K."/>
            <person name="Jackson D.J."/>
            <person name="Palmenberg A.C."/>
            <person name="Gern J.E."/>
        </authorList>
    </citation>
    <scope>INTERACTION WITH HUMAN RHINOVIRUS C CAPSID PROTEINS (MICROBIAL INFECTION)</scope>
</reference>
<reference key="6">
    <citation type="journal article" date="2020" name="Proc. Natl. Acad. Sci. U.S.A.">
        <title>Cryo-EM structure of rhinovirus C15a bound to its cadherin-related protein 3 receptor.</title>
        <authorList>
            <person name="Sun Y."/>
            <person name="Watters K."/>
            <person name="Hill M.G."/>
            <person name="Fang Q."/>
            <person name="Liu Y."/>
            <person name="Kuhn R.J."/>
            <person name="Klose T."/>
            <person name="Rossmann M.G."/>
            <person name="Palmenberg A.C."/>
        </authorList>
    </citation>
    <scope>INTERACTION WITH HUMAN RHINOVIRUS C CAPSID PROTEINS (MICROBIAL INFECTION)</scope>
    <scope>MUTAGENESIS OF PRO-26; ILE-100; ASP-102 AND VAL-118</scope>
</reference>
<evidence type="ECO:0000250" key="1"/>
<evidence type="ECO:0000255" key="2"/>
<evidence type="ECO:0000255" key="3">
    <source>
        <dbReference type="PROSITE-ProRule" id="PRU00043"/>
    </source>
</evidence>
<evidence type="ECO:0000256" key="4">
    <source>
        <dbReference type="SAM" id="MobiDB-lite"/>
    </source>
</evidence>
<evidence type="ECO:0000269" key="5">
    <source>
    </source>
</evidence>
<evidence type="ECO:0000269" key="6">
    <source>
    </source>
</evidence>
<evidence type="ECO:0000269" key="7">
    <source>
    </source>
</evidence>
<evidence type="ECO:0000303" key="8">
    <source>
    </source>
</evidence>
<evidence type="ECO:0007829" key="9">
    <source>
        <dbReference type="PDB" id="6PPO"/>
    </source>
</evidence>
<name>CDHR3_HUMAN</name>
<comment type="function">
    <text>Cadherins are calcium-dependent cell adhesion proteins. They preferentially interact with themselves in a homophilic manner in connecting cells; cadherins may thus contribute to the sorting of heterogeneous cell types.</text>
</comment>
<comment type="function">
    <text evidence="6 7">(Microbial infection) Acts as a receptor for human rhinovirus C.</text>
</comment>
<comment type="subunit">
    <text evidence="6 7">(Microbial infection) Interacts (via N-terminus) with human rhinovirus C capsid proteins VP1, VP2 and VP3.</text>
</comment>
<comment type="interaction">
    <interactant intactId="EBI-12143631">
        <id>Q6ZTQ4</id>
    </interactant>
    <interactant intactId="EBI-21499901">
        <id>P42331-2</id>
        <label>ARHGAP25</label>
    </interactant>
    <organismsDiffer>false</organismsDiffer>
    <experiments>3</experiments>
</comment>
<comment type="interaction">
    <interactant intactId="EBI-12143631">
        <id>Q6ZTQ4</id>
    </interactant>
    <interactant intactId="EBI-356507">
        <id>P50990</id>
        <label>CCT8</label>
    </interactant>
    <organismsDiffer>false</organismsDiffer>
    <experiments>3</experiments>
</comment>
<comment type="interaction">
    <interactant intactId="EBI-12143631">
        <id>Q6ZTQ4</id>
    </interactant>
    <interactant intactId="EBI-3248760">
        <id>Q13286</id>
        <label>CLN3</label>
    </interactant>
    <organismsDiffer>false</organismsDiffer>
    <experiments>3</experiments>
</comment>
<comment type="interaction">
    <interactant intactId="EBI-12143631">
        <id>Q6ZTQ4</id>
    </interactant>
    <interactant intactId="EBI-12024320">
        <id>Q8TB03</id>
        <label>CXorf38</label>
    </interactant>
    <organismsDiffer>false</organismsDiffer>
    <experiments>3</experiments>
</comment>
<comment type="interaction">
    <interactant intactId="EBI-12143631">
        <id>Q6ZTQ4</id>
    </interactant>
    <interactant intactId="EBI-10281234">
        <id>Q969S2</id>
        <label>NEIL2</label>
    </interactant>
    <organismsDiffer>false</organismsDiffer>
    <experiments>3</experiments>
</comment>
<comment type="interaction">
    <interactant intactId="EBI-12143631">
        <id>Q6ZTQ4</id>
    </interactant>
    <interactant intactId="EBI-3921217">
        <id>Q9HBI0</id>
        <label>PARVG</label>
    </interactant>
    <organismsDiffer>false</organismsDiffer>
    <experiments>3</experiments>
</comment>
<comment type="interaction">
    <interactant intactId="EBI-12143631">
        <id>Q6ZTQ4</id>
    </interactant>
    <interactant intactId="EBI-350743">
        <id>P49458</id>
        <label>SRP9</label>
    </interactant>
    <organismsDiffer>false</organismsDiffer>
    <experiments>3</experiments>
</comment>
<comment type="subcellular location">
    <subcellularLocation>
        <location evidence="5">Cell membrane</location>
        <topology evidence="1">Single-pass type I membrane protein</topology>
    </subcellularLocation>
</comment>
<comment type="alternative products">
    <event type="alternative splicing"/>
    <isoform>
        <id>Q6ZTQ4-1</id>
        <name>1</name>
        <sequence type="displayed"/>
    </isoform>
    <isoform>
        <id>Q6ZTQ4-2</id>
        <name>2</name>
        <sequence type="described" ref="VSP_028352 VSP_028353 VSP_028354"/>
    </isoform>
</comment>
<comment type="tissue specificity">
    <text evidence="5">Expressed in bronchial epithelium from adults and in fetal lung tissue.</text>
</comment>
<comment type="disease">
    <text evidence="5">Asthma susceptibility may be associated with variants affecting the gene represented in this entry in early childhood asthma with severe exacerbations occurring between 2 and 6 years of age.</text>
</comment>
<gene>
    <name type="primary">CDHR3</name>
    <name type="synonym">CDH28</name>
</gene>